<comment type="function">
    <text evidence="1">Catalyzes the transfer of the phosphoribosyl group of 5-phosphorylribose-1-pyrophosphate (PRPP) to anthranilate to yield N-(5'-phosphoribosyl)-anthranilate (PRA).</text>
</comment>
<comment type="catalytic activity">
    <reaction evidence="1">
        <text>N-(5-phospho-beta-D-ribosyl)anthranilate + diphosphate = 5-phospho-alpha-D-ribose 1-diphosphate + anthranilate</text>
        <dbReference type="Rhea" id="RHEA:11768"/>
        <dbReference type="ChEBI" id="CHEBI:16567"/>
        <dbReference type="ChEBI" id="CHEBI:18277"/>
        <dbReference type="ChEBI" id="CHEBI:33019"/>
        <dbReference type="ChEBI" id="CHEBI:58017"/>
        <dbReference type="EC" id="2.4.2.18"/>
    </reaction>
</comment>
<comment type="cofactor">
    <cofactor evidence="1">
        <name>Mg(2+)</name>
        <dbReference type="ChEBI" id="CHEBI:18420"/>
    </cofactor>
    <text evidence="1">Binds 2 magnesium ions per monomer.</text>
</comment>
<comment type="pathway">
    <text evidence="1">Amino-acid biosynthesis; L-tryptophan biosynthesis; L-tryptophan from chorismate: step 2/5.</text>
</comment>
<comment type="subunit">
    <text evidence="1">Homodimer.</text>
</comment>
<comment type="similarity">
    <text evidence="1">Belongs to the anthranilate phosphoribosyltransferase family.</text>
</comment>
<reference key="1">
    <citation type="journal article" date="2009" name="Appl. Environ. Microbiol.">
        <title>Three genomes from the phylum Acidobacteria provide insight into the lifestyles of these microorganisms in soils.</title>
        <authorList>
            <person name="Ward N.L."/>
            <person name="Challacombe J.F."/>
            <person name="Janssen P.H."/>
            <person name="Henrissat B."/>
            <person name="Coutinho P.M."/>
            <person name="Wu M."/>
            <person name="Xie G."/>
            <person name="Haft D.H."/>
            <person name="Sait M."/>
            <person name="Badger J."/>
            <person name="Barabote R.D."/>
            <person name="Bradley B."/>
            <person name="Brettin T.S."/>
            <person name="Brinkac L.M."/>
            <person name="Bruce D."/>
            <person name="Creasy T."/>
            <person name="Daugherty S.C."/>
            <person name="Davidsen T.M."/>
            <person name="DeBoy R.T."/>
            <person name="Detter J.C."/>
            <person name="Dodson R.J."/>
            <person name="Durkin A.S."/>
            <person name="Ganapathy A."/>
            <person name="Gwinn-Giglio M."/>
            <person name="Han C.S."/>
            <person name="Khouri H."/>
            <person name="Kiss H."/>
            <person name="Kothari S.P."/>
            <person name="Madupu R."/>
            <person name="Nelson K.E."/>
            <person name="Nelson W.C."/>
            <person name="Paulsen I."/>
            <person name="Penn K."/>
            <person name="Ren Q."/>
            <person name="Rosovitz M.J."/>
            <person name="Selengut J.D."/>
            <person name="Shrivastava S."/>
            <person name="Sullivan S.A."/>
            <person name="Tapia R."/>
            <person name="Thompson L.S."/>
            <person name="Watkins K.L."/>
            <person name="Yang Q."/>
            <person name="Yu C."/>
            <person name="Zafar N."/>
            <person name="Zhou L."/>
            <person name="Kuske C.R."/>
        </authorList>
    </citation>
    <scope>NUCLEOTIDE SEQUENCE [LARGE SCALE GENOMIC DNA]</scope>
    <source>
        <strain>Ellin6076</strain>
    </source>
</reference>
<dbReference type="EC" id="2.4.2.18" evidence="1"/>
<dbReference type="EMBL" id="CP000473">
    <property type="protein sequence ID" value="ABJ84352.1"/>
    <property type="molecule type" value="Genomic_DNA"/>
</dbReference>
<dbReference type="SMR" id="Q021N5"/>
<dbReference type="FunCoup" id="Q021N5">
    <property type="interactions" value="474"/>
</dbReference>
<dbReference type="STRING" id="234267.Acid_3379"/>
<dbReference type="KEGG" id="sus:Acid_3379"/>
<dbReference type="eggNOG" id="COG0547">
    <property type="taxonomic scope" value="Bacteria"/>
</dbReference>
<dbReference type="HOGENOM" id="CLU_034315_2_1_0"/>
<dbReference type="InParanoid" id="Q021N5"/>
<dbReference type="OrthoDB" id="9806430at2"/>
<dbReference type="UniPathway" id="UPA00035">
    <property type="reaction ID" value="UER00041"/>
</dbReference>
<dbReference type="GO" id="GO:0005829">
    <property type="term" value="C:cytosol"/>
    <property type="evidence" value="ECO:0007669"/>
    <property type="project" value="TreeGrafter"/>
</dbReference>
<dbReference type="GO" id="GO:0004048">
    <property type="term" value="F:anthranilate phosphoribosyltransferase activity"/>
    <property type="evidence" value="ECO:0007669"/>
    <property type="project" value="UniProtKB-UniRule"/>
</dbReference>
<dbReference type="GO" id="GO:0000287">
    <property type="term" value="F:magnesium ion binding"/>
    <property type="evidence" value="ECO:0007669"/>
    <property type="project" value="UniProtKB-UniRule"/>
</dbReference>
<dbReference type="GO" id="GO:0000162">
    <property type="term" value="P:L-tryptophan biosynthetic process"/>
    <property type="evidence" value="ECO:0007669"/>
    <property type="project" value="UniProtKB-UniRule"/>
</dbReference>
<dbReference type="FunFam" id="3.40.1030.10:FF:000002">
    <property type="entry name" value="Anthranilate phosphoribosyltransferase"/>
    <property type="match status" value="1"/>
</dbReference>
<dbReference type="Gene3D" id="3.40.1030.10">
    <property type="entry name" value="Nucleoside phosphorylase/phosphoribosyltransferase catalytic domain"/>
    <property type="match status" value="1"/>
</dbReference>
<dbReference type="Gene3D" id="1.20.970.10">
    <property type="entry name" value="Transferase, Pyrimidine Nucleoside Phosphorylase, Chain C"/>
    <property type="match status" value="1"/>
</dbReference>
<dbReference type="HAMAP" id="MF_00211">
    <property type="entry name" value="TrpD"/>
    <property type="match status" value="1"/>
</dbReference>
<dbReference type="InterPro" id="IPR005940">
    <property type="entry name" value="Anthranilate_Pribosyl_Tfrase"/>
</dbReference>
<dbReference type="InterPro" id="IPR000312">
    <property type="entry name" value="Glycosyl_Trfase_fam3"/>
</dbReference>
<dbReference type="InterPro" id="IPR017459">
    <property type="entry name" value="Glycosyl_Trfase_fam3_N_dom"/>
</dbReference>
<dbReference type="InterPro" id="IPR036320">
    <property type="entry name" value="Glycosyl_Trfase_fam3_N_dom_sf"/>
</dbReference>
<dbReference type="InterPro" id="IPR035902">
    <property type="entry name" value="Nuc_phospho_transferase"/>
</dbReference>
<dbReference type="NCBIfam" id="TIGR01245">
    <property type="entry name" value="trpD"/>
    <property type="match status" value="1"/>
</dbReference>
<dbReference type="PANTHER" id="PTHR43285">
    <property type="entry name" value="ANTHRANILATE PHOSPHORIBOSYLTRANSFERASE"/>
    <property type="match status" value="1"/>
</dbReference>
<dbReference type="PANTHER" id="PTHR43285:SF2">
    <property type="entry name" value="ANTHRANILATE PHOSPHORIBOSYLTRANSFERASE"/>
    <property type="match status" value="1"/>
</dbReference>
<dbReference type="Pfam" id="PF02885">
    <property type="entry name" value="Glycos_trans_3N"/>
    <property type="match status" value="1"/>
</dbReference>
<dbReference type="Pfam" id="PF00591">
    <property type="entry name" value="Glycos_transf_3"/>
    <property type="match status" value="1"/>
</dbReference>
<dbReference type="SUPFAM" id="SSF52418">
    <property type="entry name" value="Nucleoside phosphorylase/phosphoribosyltransferase catalytic domain"/>
    <property type="match status" value="1"/>
</dbReference>
<dbReference type="SUPFAM" id="SSF47648">
    <property type="entry name" value="Nucleoside phosphorylase/phosphoribosyltransferase N-terminal domain"/>
    <property type="match status" value="1"/>
</dbReference>
<feature type="chain" id="PRO_0000325466" description="Anthranilate phosphoribosyltransferase">
    <location>
        <begin position="1"/>
        <end position="340"/>
    </location>
</feature>
<feature type="binding site" evidence="1">
    <location>
        <position position="83"/>
    </location>
    <ligand>
        <name>5-phospho-alpha-D-ribose 1-diphosphate</name>
        <dbReference type="ChEBI" id="CHEBI:58017"/>
    </ligand>
</feature>
<feature type="binding site" evidence="1">
    <location>
        <position position="83"/>
    </location>
    <ligand>
        <name>anthranilate</name>
        <dbReference type="ChEBI" id="CHEBI:16567"/>
        <label>1</label>
    </ligand>
</feature>
<feature type="binding site" evidence="1">
    <location>
        <begin position="86"/>
        <end position="87"/>
    </location>
    <ligand>
        <name>5-phospho-alpha-D-ribose 1-diphosphate</name>
        <dbReference type="ChEBI" id="CHEBI:58017"/>
    </ligand>
</feature>
<feature type="binding site" evidence="1">
    <location>
        <position position="91"/>
    </location>
    <ligand>
        <name>5-phospho-alpha-D-ribose 1-diphosphate</name>
        <dbReference type="ChEBI" id="CHEBI:58017"/>
    </ligand>
</feature>
<feature type="binding site" evidence="1">
    <location>
        <begin position="93"/>
        <end position="96"/>
    </location>
    <ligand>
        <name>5-phospho-alpha-D-ribose 1-diphosphate</name>
        <dbReference type="ChEBI" id="CHEBI:58017"/>
    </ligand>
</feature>
<feature type="binding site" evidence="1">
    <location>
        <position position="95"/>
    </location>
    <ligand>
        <name>Mg(2+)</name>
        <dbReference type="ChEBI" id="CHEBI:18420"/>
        <label>1</label>
    </ligand>
</feature>
<feature type="binding site" evidence="1">
    <location>
        <begin position="111"/>
        <end position="119"/>
    </location>
    <ligand>
        <name>5-phospho-alpha-D-ribose 1-diphosphate</name>
        <dbReference type="ChEBI" id="CHEBI:58017"/>
    </ligand>
</feature>
<feature type="binding site" evidence="1">
    <location>
        <position position="114"/>
    </location>
    <ligand>
        <name>anthranilate</name>
        <dbReference type="ChEBI" id="CHEBI:16567"/>
        <label>1</label>
    </ligand>
</feature>
<feature type="binding site" evidence="1">
    <location>
        <position position="123"/>
    </location>
    <ligand>
        <name>5-phospho-alpha-D-ribose 1-diphosphate</name>
        <dbReference type="ChEBI" id="CHEBI:58017"/>
    </ligand>
</feature>
<feature type="binding site" evidence="1">
    <location>
        <position position="169"/>
    </location>
    <ligand>
        <name>anthranilate</name>
        <dbReference type="ChEBI" id="CHEBI:16567"/>
        <label>2</label>
    </ligand>
</feature>
<feature type="binding site" evidence="1">
    <location>
        <position position="228"/>
    </location>
    <ligand>
        <name>Mg(2+)</name>
        <dbReference type="ChEBI" id="CHEBI:18420"/>
        <label>2</label>
    </ligand>
</feature>
<feature type="binding site" evidence="1">
    <location>
        <position position="229"/>
    </location>
    <ligand>
        <name>Mg(2+)</name>
        <dbReference type="ChEBI" id="CHEBI:18420"/>
        <label>1</label>
    </ligand>
</feature>
<feature type="binding site" evidence="1">
    <location>
        <position position="229"/>
    </location>
    <ligand>
        <name>Mg(2+)</name>
        <dbReference type="ChEBI" id="CHEBI:18420"/>
        <label>2</label>
    </ligand>
</feature>
<gene>
    <name evidence="1" type="primary">trpD</name>
    <name type="ordered locus">Acid_3379</name>
</gene>
<evidence type="ECO:0000255" key="1">
    <source>
        <dbReference type="HAMAP-Rule" id="MF_00211"/>
    </source>
</evidence>
<organism>
    <name type="scientific">Solibacter usitatus (strain Ellin6076)</name>
    <dbReference type="NCBI Taxonomy" id="234267"/>
    <lineage>
        <taxon>Bacteria</taxon>
        <taxon>Pseudomonadati</taxon>
        <taxon>Acidobacteriota</taxon>
        <taxon>Terriglobia</taxon>
        <taxon>Bryobacterales</taxon>
        <taxon>Solibacteraceae</taxon>
        <taxon>Candidatus Solibacter</taxon>
    </lineage>
</organism>
<protein>
    <recommendedName>
        <fullName evidence="1">Anthranilate phosphoribosyltransferase</fullName>
        <ecNumber evidence="1">2.4.2.18</ecNumber>
    </recommendedName>
</protein>
<accession>Q021N5</accession>
<sequence>MSLLPHLMRLVEEQHLSAADAEAAMQIVLRGEASHAQIAAFLIALKMKGETVDELVGFARAMRAMAVPVSPNLEGATLLDTCGTGGDGAGTFNISTVAAFVVAAAGVHVAKHGNRSITSKCGSADLLEAWGIPVAMPPEATAFAIREVGIGFLFAPAVHTAMKHAHPVRVDLKLRTVFNLLGPLTNPAGATAQLIGAPSSHAAELMAGAIAALGLERGFVVHGSDGLDEITTTGPTLAFEVRNGKVERRTLEPADFAVAIAAPEDLKGGDLARNLEIADSVLAGAAGPHRDIVLVNAAAALVAAGKADTFLEGMALGVVAIDSGAARAKVKALADFAASR</sequence>
<proteinExistence type="inferred from homology"/>
<name>TRPD_SOLUE</name>
<keyword id="KW-0028">Amino-acid biosynthesis</keyword>
<keyword id="KW-0057">Aromatic amino acid biosynthesis</keyword>
<keyword id="KW-0328">Glycosyltransferase</keyword>
<keyword id="KW-0460">Magnesium</keyword>
<keyword id="KW-0479">Metal-binding</keyword>
<keyword id="KW-0808">Transferase</keyword>
<keyword id="KW-0822">Tryptophan biosynthesis</keyword>